<sequence>MKKNRLLFRVIILLILSGAVGFTLYQGYFSKEEKMEIGKEAPNFVVTDLEGKKIELKDFKGKGVFLNFWGTWCKPCEKEMPYMNELYPKYKEKGVEIIALDADETDIAVKNFVKQYDLKFPVAIDKGGEIIKTYGVIPLPTSFLIDKDGKVIQEIKGEQTKEQLEEYLKKITP</sequence>
<accession>Q73B22</accession>
<gene>
    <name evidence="1" type="primary">resA</name>
    <name type="ordered locus">BCE_1598</name>
</gene>
<name>RESA_BACC1</name>
<keyword id="KW-1003">Cell membrane</keyword>
<keyword id="KW-0201">Cytochrome c-type biogenesis</keyword>
<keyword id="KW-1015">Disulfide bond</keyword>
<keyword id="KW-0472">Membrane</keyword>
<keyword id="KW-0560">Oxidoreductase</keyword>
<keyword id="KW-0676">Redox-active center</keyword>
<keyword id="KW-0735">Signal-anchor</keyword>
<keyword id="KW-0812">Transmembrane</keyword>
<keyword id="KW-1133">Transmembrane helix</keyword>
<evidence type="ECO:0000255" key="1">
    <source>
        <dbReference type="HAMAP-Rule" id="MF_01319"/>
    </source>
</evidence>
<proteinExistence type="inferred from homology"/>
<organism>
    <name type="scientific">Bacillus cereus (strain ATCC 10987 / NRS 248)</name>
    <dbReference type="NCBI Taxonomy" id="222523"/>
    <lineage>
        <taxon>Bacteria</taxon>
        <taxon>Bacillati</taxon>
        <taxon>Bacillota</taxon>
        <taxon>Bacilli</taxon>
        <taxon>Bacillales</taxon>
        <taxon>Bacillaceae</taxon>
        <taxon>Bacillus</taxon>
        <taxon>Bacillus cereus group</taxon>
    </lineage>
</organism>
<protein>
    <recommendedName>
        <fullName evidence="1">Thiol-disulfide oxidoreductase ResA</fullName>
    </recommendedName>
</protein>
<feature type="chain" id="PRO_0000308266" description="Thiol-disulfide oxidoreductase ResA">
    <location>
        <begin position="1"/>
        <end position="173"/>
    </location>
</feature>
<feature type="transmembrane region" description="Helical; Signal-anchor for type II membrane protein" evidence="1">
    <location>
        <begin position="10"/>
        <end position="29"/>
    </location>
</feature>
<feature type="domain" description="Thioredoxin" evidence="1">
    <location>
        <begin position="35"/>
        <end position="173"/>
    </location>
</feature>
<feature type="disulfide bond" description="Redox-active" evidence="1">
    <location>
        <begin position="73"/>
        <end position="76"/>
    </location>
</feature>
<dbReference type="EMBL" id="AE017194">
    <property type="protein sequence ID" value="AAS40527.1"/>
    <property type="molecule type" value="Genomic_DNA"/>
</dbReference>
<dbReference type="SMR" id="Q73B22"/>
<dbReference type="KEGG" id="bca:BCE_1598"/>
<dbReference type="HOGENOM" id="CLU_042529_11_2_9"/>
<dbReference type="UniPathway" id="UPA00555"/>
<dbReference type="Proteomes" id="UP000002527">
    <property type="component" value="Chromosome"/>
</dbReference>
<dbReference type="GO" id="GO:0005886">
    <property type="term" value="C:plasma membrane"/>
    <property type="evidence" value="ECO:0007669"/>
    <property type="project" value="UniProtKB-SubCell"/>
</dbReference>
<dbReference type="GO" id="GO:0016209">
    <property type="term" value="F:antioxidant activity"/>
    <property type="evidence" value="ECO:0007669"/>
    <property type="project" value="InterPro"/>
</dbReference>
<dbReference type="GO" id="GO:0015036">
    <property type="term" value="F:disulfide oxidoreductase activity"/>
    <property type="evidence" value="ECO:0007669"/>
    <property type="project" value="UniProtKB-UniRule"/>
</dbReference>
<dbReference type="GO" id="GO:0017004">
    <property type="term" value="P:cytochrome complex assembly"/>
    <property type="evidence" value="ECO:0007669"/>
    <property type="project" value="UniProtKB-UniRule"/>
</dbReference>
<dbReference type="CDD" id="cd02966">
    <property type="entry name" value="TlpA_like_family"/>
    <property type="match status" value="1"/>
</dbReference>
<dbReference type="Gene3D" id="3.40.30.10">
    <property type="entry name" value="Glutaredoxin"/>
    <property type="match status" value="1"/>
</dbReference>
<dbReference type="HAMAP" id="MF_01319">
    <property type="entry name" value="ResA"/>
    <property type="match status" value="1"/>
</dbReference>
<dbReference type="InterPro" id="IPR000866">
    <property type="entry name" value="AhpC/TSA"/>
</dbReference>
<dbReference type="InterPro" id="IPR023555">
    <property type="entry name" value="Thiol-dS_OxRdtase_ResA"/>
</dbReference>
<dbReference type="InterPro" id="IPR036249">
    <property type="entry name" value="Thioredoxin-like_sf"/>
</dbReference>
<dbReference type="InterPro" id="IPR013766">
    <property type="entry name" value="Thioredoxin_domain"/>
</dbReference>
<dbReference type="InterPro" id="IPR050553">
    <property type="entry name" value="Thioredoxin_ResA/DsbE_sf"/>
</dbReference>
<dbReference type="NCBIfam" id="NF002854">
    <property type="entry name" value="PRK03147.1"/>
    <property type="match status" value="1"/>
</dbReference>
<dbReference type="PANTHER" id="PTHR42852">
    <property type="entry name" value="THIOL:DISULFIDE INTERCHANGE PROTEIN DSBE"/>
    <property type="match status" value="1"/>
</dbReference>
<dbReference type="PANTHER" id="PTHR42852:SF6">
    <property type="entry name" value="THIOL:DISULFIDE INTERCHANGE PROTEIN DSBE"/>
    <property type="match status" value="1"/>
</dbReference>
<dbReference type="Pfam" id="PF00578">
    <property type="entry name" value="AhpC-TSA"/>
    <property type="match status" value="1"/>
</dbReference>
<dbReference type="SUPFAM" id="SSF52833">
    <property type="entry name" value="Thioredoxin-like"/>
    <property type="match status" value="1"/>
</dbReference>
<dbReference type="PROSITE" id="PS51352">
    <property type="entry name" value="THIOREDOXIN_2"/>
    <property type="match status" value="1"/>
</dbReference>
<reference key="1">
    <citation type="journal article" date="2004" name="Nucleic Acids Res.">
        <title>The genome sequence of Bacillus cereus ATCC 10987 reveals metabolic adaptations and a large plasmid related to Bacillus anthracis pXO1.</title>
        <authorList>
            <person name="Rasko D.A."/>
            <person name="Ravel J."/>
            <person name="Oekstad O.A."/>
            <person name="Helgason E."/>
            <person name="Cer R.Z."/>
            <person name="Jiang L."/>
            <person name="Shores K.A."/>
            <person name="Fouts D.E."/>
            <person name="Tourasse N.J."/>
            <person name="Angiuoli S.V."/>
            <person name="Kolonay J.F."/>
            <person name="Nelson W.C."/>
            <person name="Kolstoe A.-B."/>
            <person name="Fraser C.M."/>
            <person name="Read T.D."/>
        </authorList>
    </citation>
    <scope>NUCLEOTIDE SEQUENCE [LARGE SCALE GENOMIC DNA]</scope>
    <source>
        <strain>ATCC 10987 / NRS 248</strain>
    </source>
</reference>
<comment type="function">
    <text evidence="1">Thiol-disulfide oxidoreductase which is required in disulfide reduction during c-type cytochrome synthesis. May accept reducing equivalents from CcdA, leading to breakage of disulfide bonds in apocytochrome c; following this reduction heme can be covalently attached.</text>
</comment>
<comment type="pathway">
    <text evidence="1">Protein modification; cytochrome c assembly.</text>
</comment>
<comment type="subcellular location">
    <subcellularLocation>
        <location evidence="1">Cell membrane</location>
        <topology evidence="1">Single-pass type II membrane protein</topology>
    </subcellularLocation>
    <text evidence="1">The thioredoxin-like motif is exposed on the outside of the membrane.</text>
</comment>
<comment type="similarity">
    <text evidence="1">Belongs to the thioredoxin family. ResA subfamily.</text>
</comment>